<name>MLEC_HUMAN</name>
<keyword id="KW-0002">3D-structure</keyword>
<keyword id="KW-0119">Carbohydrate metabolism</keyword>
<keyword id="KW-0903">Direct protein sequencing</keyword>
<keyword id="KW-0256">Endoplasmic reticulum</keyword>
<keyword id="KW-0325">Glycoprotein</keyword>
<keyword id="KW-0472">Membrane</keyword>
<keyword id="KW-1267">Proteomics identification</keyword>
<keyword id="KW-1185">Reference proteome</keyword>
<keyword id="KW-0732">Signal</keyword>
<keyword id="KW-0812">Transmembrane</keyword>
<keyword id="KW-1133">Transmembrane helix</keyword>
<gene>
    <name evidence="6" type="primary">MLEC</name>
    <name type="synonym">KIAA0152</name>
</gene>
<evidence type="ECO:0000250" key="1"/>
<evidence type="ECO:0000255" key="2"/>
<evidence type="ECO:0000256" key="3">
    <source>
        <dbReference type="SAM" id="MobiDB-lite"/>
    </source>
</evidence>
<evidence type="ECO:0000269" key="4">
    <source>
    </source>
</evidence>
<evidence type="ECO:0000305" key="5"/>
<evidence type="ECO:0000312" key="6">
    <source>
        <dbReference type="HGNC" id="HGNC:28973"/>
    </source>
</evidence>
<evidence type="ECO:0007744" key="7">
    <source>
        <dbReference type="PDB" id="6S7T"/>
    </source>
</evidence>
<evidence type="ECO:0007829" key="8">
    <source>
        <dbReference type="PDB" id="6S7T"/>
    </source>
</evidence>
<reference key="1">
    <citation type="journal article" date="1995" name="DNA Res.">
        <title>Prediction of the coding sequences of unidentified human genes. IV. The coding sequences of 40 new genes (KIAA0121-KIAA0160) deduced by analysis of cDNA clones from human cell line KG-1.</title>
        <authorList>
            <person name="Nagase T."/>
            <person name="Seki N."/>
            <person name="Tanaka A."/>
            <person name="Ishikawa K."/>
            <person name="Nomura N."/>
        </authorList>
    </citation>
    <scope>NUCLEOTIDE SEQUENCE [LARGE SCALE MRNA]</scope>
    <source>
        <tissue>Bone marrow</tissue>
    </source>
</reference>
<reference key="2">
    <citation type="journal article" date="2004" name="Genome Res.">
        <title>The status, quality, and expansion of the NIH full-length cDNA project: the Mammalian Gene Collection (MGC).</title>
        <authorList>
            <consortium name="The MGC Project Team"/>
        </authorList>
    </citation>
    <scope>NUCLEOTIDE SEQUENCE [LARGE SCALE MRNA]</scope>
    <source>
        <tissue>Lung</tissue>
        <tissue>Skin</tissue>
    </source>
</reference>
<reference key="3">
    <citation type="submission" date="2005-06" db="UniProtKB">
        <authorList>
            <person name="Bienvenut W.V."/>
        </authorList>
    </citation>
    <scope>PROTEIN SEQUENCE OF 91-103; 127-138; 144-151 AND 178-190</scope>
    <scope>IDENTIFICATION BY MASS SPECTROMETRY</scope>
    <source>
        <tissue>B-cell lymphoma</tissue>
    </source>
</reference>
<reference key="4">
    <citation type="journal article" date="2011" name="BMC Syst. Biol.">
        <title>Initial characterization of the human central proteome.</title>
        <authorList>
            <person name="Burkard T.R."/>
            <person name="Planyavsky M."/>
            <person name="Kaupe I."/>
            <person name="Breitwieser F.P."/>
            <person name="Buerckstuemmer T."/>
            <person name="Bennett K.L."/>
            <person name="Superti-Furga G."/>
            <person name="Colinge J."/>
        </authorList>
    </citation>
    <scope>IDENTIFICATION BY MASS SPECTROMETRY [LARGE SCALE ANALYSIS]</scope>
</reference>
<reference key="5">
    <citation type="journal article" date="2014" name="J. Proteomics">
        <title>An enzyme assisted RP-RPLC approach for in-depth analysis of human liver phosphoproteome.</title>
        <authorList>
            <person name="Bian Y."/>
            <person name="Song C."/>
            <person name="Cheng K."/>
            <person name="Dong M."/>
            <person name="Wang F."/>
            <person name="Huang J."/>
            <person name="Sun D."/>
            <person name="Wang L."/>
            <person name="Ye M."/>
            <person name="Zou H."/>
        </authorList>
    </citation>
    <scope>IDENTIFICATION BY MASS SPECTROMETRY [LARGE SCALE ANALYSIS]</scope>
    <source>
        <tissue>Liver</tissue>
    </source>
</reference>
<reference key="6">
    <citation type="journal article" date="2015" name="Proteomics">
        <title>N-terminome analysis of the human mitochondrial proteome.</title>
        <authorList>
            <person name="Vaca Jacome A.S."/>
            <person name="Rabilloud T."/>
            <person name="Schaeffer-Reiss C."/>
            <person name="Rompais M."/>
            <person name="Ayoub D."/>
            <person name="Lane L."/>
            <person name="Bairoch A."/>
            <person name="Van Dorsselaer A."/>
            <person name="Carapito C."/>
        </authorList>
    </citation>
    <scope>IDENTIFICATION BY MASS SPECTROMETRY [LARGE SCALE ANALYSIS]</scope>
</reference>
<reference evidence="7" key="7">
    <citation type="journal article" date="2019" name="Science">
        <title>Cryo-electron microscopy structures of human oligosaccharyltransferase complexes OST-A and OST-B.</title>
        <authorList>
            <person name="Ramirez A.S."/>
            <person name="Kowal J."/>
            <person name="Locher K.P."/>
        </authorList>
    </citation>
    <scope>STRUCTURE BY ELECTRON MICROSCOPY (3.50 ANGSTROMS)</scope>
    <scope>INTERACTION WITH OLIGOSACCHARYLTRANSFERASE (OST) COMPLEX</scope>
</reference>
<proteinExistence type="evidence at protein level"/>
<organism>
    <name type="scientific">Homo sapiens</name>
    <name type="common">Human</name>
    <dbReference type="NCBI Taxonomy" id="9606"/>
    <lineage>
        <taxon>Eukaryota</taxon>
        <taxon>Metazoa</taxon>
        <taxon>Chordata</taxon>
        <taxon>Craniata</taxon>
        <taxon>Vertebrata</taxon>
        <taxon>Euteleostomi</taxon>
        <taxon>Mammalia</taxon>
        <taxon>Eutheria</taxon>
        <taxon>Euarchontoglires</taxon>
        <taxon>Primates</taxon>
        <taxon>Haplorrhini</taxon>
        <taxon>Catarrhini</taxon>
        <taxon>Hominidae</taxon>
        <taxon>Homo</taxon>
    </lineage>
</organism>
<protein>
    <recommendedName>
        <fullName evidence="5">Malectin</fullName>
    </recommendedName>
</protein>
<comment type="function">
    <text evidence="1">Carbohydrate-binding protein with a strong ligand preference for Glc2-N-glycan. May play a role in the early steps of protein N-glycosylation (By similarity).</text>
</comment>
<comment type="subunit">
    <text evidence="4">Interacts with the oligosaccharyltransferase (OST) complex.</text>
</comment>
<comment type="interaction">
    <interactant intactId="EBI-1046466">
        <id>Q14165</id>
    </interactant>
    <interactant intactId="EBI-355963">
        <id>P04843</id>
        <label>RPN1</label>
    </interactant>
    <organismsDiffer>false</organismsDiffer>
    <experiments>3</experiments>
</comment>
<comment type="subcellular location">
    <subcellularLocation>
        <location evidence="1">Endoplasmic reticulum membrane</location>
        <topology evidence="1">Single-pass type I membrane protein</topology>
    </subcellularLocation>
</comment>
<comment type="similarity">
    <text evidence="5">Belongs to the malectin family.</text>
</comment>
<comment type="sequence caution" evidence="5">
    <conflict type="erroneous initiation">
        <sequence resource="EMBL-CDS" id="BAA09773"/>
    </conflict>
</comment>
<dbReference type="EMBL" id="D63486">
    <property type="protein sequence ID" value="BAA09773.2"/>
    <property type="status" value="ALT_INIT"/>
    <property type="molecule type" value="mRNA"/>
</dbReference>
<dbReference type="EMBL" id="BC000371">
    <property type="protein sequence ID" value="AAH00371.1"/>
    <property type="molecule type" value="mRNA"/>
</dbReference>
<dbReference type="EMBL" id="BC016297">
    <property type="protein sequence ID" value="AAH16297.1"/>
    <property type="molecule type" value="mRNA"/>
</dbReference>
<dbReference type="CCDS" id="CCDS9206.1"/>
<dbReference type="RefSeq" id="NP_055545.1">
    <property type="nucleotide sequence ID" value="NM_014730.4"/>
</dbReference>
<dbReference type="PDB" id="6S7T">
    <property type="method" value="EM"/>
    <property type="resolution" value="3.50 A"/>
    <property type="chains" value="I=1-292"/>
</dbReference>
<dbReference type="PDBsum" id="6S7T"/>
<dbReference type="EMDB" id="EMD-10112"/>
<dbReference type="SMR" id="Q14165"/>
<dbReference type="BioGRID" id="115108">
    <property type="interactions" value="114"/>
</dbReference>
<dbReference type="FunCoup" id="Q14165">
    <property type="interactions" value="1222"/>
</dbReference>
<dbReference type="IntAct" id="Q14165">
    <property type="interactions" value="57"/>
</dbReference>
<dbReference type="MINT" id="Q14165"/>
<dbReference type="STRING" id="9606.ENSP00000228506"/>
<dbReference type="CAZy" id="CBM57">
    <property type="family name" value="Carbohydrate-Binding Module Family 57"/>
</dbReference>
<dbReference type="GlyCosmos" id="Q14165">
    <property type="glycosylation" value="1 site, No reported glycans"/>
</dbReference>
<dbReference type="GlyGen" id="Q14165">
    <property type="glycosylation" value="2 sites, 1 O-linked glycan (1 site)"/>
</dbReference>
<dbReference type="iPTMnet" id="Q14165"/>
<dbReference type="PhosphoSitePlus" id="Q14165"/>
<dbReference type="SwissPalm" id="Q14165"/>
<dbReference type="BioMuta" id="MLEC"/>
<dbReference type="DMDM" id="2495712"/>
<dbReference type="OGP" id="Q14165"/>
<dbReference type="jPOST" id="Q14165"/>
<dbReference type="MassIVE" id="Q14165"/>
<dbReference type="PaxDb" id="9606-ENSP00000228506"/>
<dbReference type="PeptideAtlas" id="Q14165"/>
<dbReference type="ProteomicsDB" id="59893"/>
<dbReference type="Pumba" id="Q14165"/>
<dbReference type="Antibodypedia" id="2338">
    <property type="antibodies" value="118 antibodies from 22 providers"/>
</dbReference>
<dbReference type="DNASU" id="9761"/>
<dbReference type="Ensembl" id="ENST00000228506.8">
    <property type="protein sequence ID" value="ENSP00000228506.3"/>
    <property type="gene ID" value="ENSG00000110917.9"/>
</dbReference>
<dbReference type="GeneID" id="9761"/>
<dbReference type="KEGG" id="hsa:9761"/>
<dbReference type="MANE-Select" id="ENST00000228506.8">
    <property type="protein sequence ID" value="ENSP00000228506.3"/>
    <property type="RefSeq nucleotide sequence ID" value="NM_014730.4"/>
    <property type="RefSeq protein sequence ID" value="NP_055545.1"/>
</dbReference>
<dbReference type="UCSC" id="uc001tyy.2">
    <property type="organism name" value="human"/>
</dbReference>
<dbReference type="AGR" id="HGNC:28973"/>
<dbReference type="CTD" id="9761"/>
<dbReference type="DisGeNET" id="9761"/>
<dbReference type="GeneCards" id="MLEC"/>
<dbReference type="HGNC" id="HGNC:28973">
    <property type="gene designation" value="MLEC"/>
</dbReference>
<dbReference type="HPA" id="ENSG00000110917">
    <property type="expression patterns" value="Low tissue specificity"/>
</dbReference>
<dbReference type="MIM" id="613802">
    <property type="type" value="gene"/>
</dbReference>
<dbReference type="neXtProt" id="NX_Q14165"/>
<dbReference type="OpenTargets" id="ENSG00000110917"/>
<dbReference type="PharmGKB" id="PA164723038"/>
<dbReference type="VEuPathDB" id="HostDB:ENSG00000110917"/>
<dbReference type="eggNOG" id="KOG3593">
    <property type="taxonomic scope" value="Eukaryota"/>
</dbReference>
<dbReference type="GeneTree" id="ENSGT00390000016504"/>
<dbReference type="HOGENOM" id="CLU_065446_1_0_1"/>
<dbReference type="InParanoid" id="Q14165"/>
<dbReference type="OMA" id="PNPYSMD"/>
<dbReference type="OrthoDB" id="10013439at2759"/>
<dbReference type="PAN-GO" id="Q14165">
    <property type="GO annotations" value="1 GO annotation based on evolutionary models"/>
</dbReference>
<dbReference type="PhylomeDB" id="Q14165"/>
<dbReference type="TreeFam" id="TF314856"/>
<dbReference type="PathwayCommons" id="Q14165"/>
<dbReference type="Reactome" id="R-HSA-532668">
    <property type="pathway name" value="N-glycan trimming in the ER and Calnexin/Calreticulin cycle"/>
</dbReference>
<dbReference type="Reactome" id="R-HSA-6798695">
    <property type="pathway name" value="Neutrophil degranulation"/>
</dbReference>
<dbReference type="SignaLink" id="Q14165"/>
<dbReference type="SIGNOR" id="Q14165"/>
<dbReference type="BioGRID-ORCS" id="9761">
    <property type="hits" value="14 hits in 1154 CRISPR screens"/>
</dbReference>
<dbReference type="ChiTaRS" id="MLEC">
    <property type="organism name" value="human"/>
</dbReference>
<dbReference type="GenomeRNAi" id="9761"/>
<dbReference type="Pharos" id="Q14165">
    <property type="development level" value="Tbio"/>
</dbReference>
<dbReference type="PRO" id="PR:Q14165"/>
<dbReference type="Proteomes" id="UP000005640">
    <property type="component" value="Chromosome 12"/>
</dbReference>
<dbReference type="RNAct" id="Q14165">
    <property type="molecule type" value="protein"/>
</dbReference>
<dbReference type="Bgee" id="ENSG00000110917">
    <property type="expression patterns" value="Expressed in mucosa of sigmoid colon and 220 other cell types or tissues"/>
</dbReference>
<dbReference type="ExpressionAtlas" id="Q14165">
    <property type="expression patterns" value="baseline and differential"/>
</dbReference>
<dbReference type="GO" id="GO:0005783">
    <property type="term" value="C:endoplasmic reticulum"/>
    <property type="evidence" value="ECO:0000250"/>
    <property type="project" value="UniProtKB"/>
</dbReference>
<dbReference type="GO" id="GO:0005789">
    <property type="term" value="C:endoplasmic reticulum membrane"/>
    <property type="evidence" value="ECO:0000304"/>
    <property type="project" value="Reactome"/>
</dbReference>
<dbReference type="GO" id="GO:0016020">
    <property type="term" value="C:membrane"/>
    <property type="evidence" value="ECO:0007005"/>
    <property type="project" value="UniProtKB"/>
</dbReference>
<dbReference type="GO" id="GO:0008250">
    <property type="term" value="C:oligosaccharyltransferase complex"/>
    <property type="evidence" value="ECO:0000353"/>
    <property type="project" value="ComplexPortal"/>
</dbReference>
<dbReference type="GO" id="GO:0005886">
    <property type="term" value="C:plasma membrane"/>
    <property type="evidence" value="ECO:0000304"/>
    <property type="project" value="Reactome"/>
</dbReference>
<dbReference type="GO" id="GO:0035579">
    <property type="term" value="C:specific granule membrane"/>
    <property type="evidence" value="ECO:0000304"/>
    <property type="project" value="Reactome"/>
</dbReference>
<dbReference type="GO" id="GO:0030246">
    <property type="term" value="F:carbohydrate binding"/>
    <property type="evidence" value="ECO:0000250"/>
    <property type="project" value="UniProtKB"/>
</dbReference>
<dbReference type="GO" id="GO:0019899">
    <property type="term" value="F:enzyme binding"/>
    <property type="evidence" value="ECO:0000353"/>
    <property type="project" value="UniProtKB"/>
</dbReference>
<dbReference type="FunFam" id="2.60.120.430:FF:000006">
    <property type="entry name" value="Malectin"/>
    <property type="match status" value="1"/>
</dbReference>
<dbReference type="Gene3D" id="2.60.120.430">
    <property type="entry name" value="Galactose-binding lectin"/>
    <property type="match status" value="1"/>
</dbReference>
<dbReference type="InterPro" id="IPR021720">
    <property type="entry name" value="Malectin_dom"/>
</dbReference>
<dbReference type="InterPro" id="IPR039155">
    <property type="entry name" value="MLEC"/>
</dbReference>
<dbReference type="PANTHER" id="PTHR13460">
    <property type="match status" value="1"/>
</dbReference>
<dbReference type="PANTHER" id="PTHR13460:SF0">
    <property type="entry name" value="MALECTIN"/>
    <property type="match status" value="1"/>
</dbReference>
<dbReference type="Pfam" id="PF11721">
    <property type="entry name" value="Malectin"/>
    <property type="match status" value="1"/>
</dbReference>
<sequence>MLGAWAVEGTAVALLRLLLLLLPPAIRGPGLGVAGVAGAAGAGLPESVIWAVNAGGEAHVDVHGIHFRKDPLEGRVGRASDYGMKLPILRSNPEDQILYQTERYNEETFGYEVPIKEEGDYVLVLKFAEVYFAQSQQKVFDVRLNGHVVVKDLDIFDRVGHSTAHDEIIPMSIRKGKLSVQGEVSTFTGKLYIEFVKGYYDNPKVCALYIMAGTVDDVPKLQPHPGLEKKEEEEEEEEYDEGSNLKKQTNKNRVQSGPRTPNPYASDNSSLMFPILVAFGVFIPTLFCLCRL</sequence>
<feature type="signal peptide" evidence="2">
    <location>
        <begin position="1"/>
        <end position="28"/>
    </location>
</feature>
<feature type="chain" id="PRO_0000013982" description="Malectin">
    <location>
        <begin position="29"/>
        <end position="292"/>
    </location>
</feature>
<feature type="topological domain" description="Lumenal" evidence="2">
    <location>
        <begin position="29"/>
        <end position="269"/>
    </location>
</feature>
<feature type="transmembrane region" description="Helical" evidence="2">
    <location>
        <begin position="270"/>
        <end position="290"/>
    </location>
</feature>
<feature type="topological domain" description="Cytoplasmic" evidence="2">
    <location>
        <begin position="291"/>
        <end position="292"/>
    </location>
</feature>
<feature type="region of interest" description="Disordered" evidence="3">
    <location>
        <begin position="221"/>
        <end position="265"/>
    </location>
</feature>
<feature type="compositionally biased region" description="Acidic residues" evidence="3">
    <location>
        <begin position="231"/>
        <end position="241"/>
    </location>
</feature>
<feature type="compositionally biased region" description="Polar residues" evidence="3">
    <location>
        <begin position="245"/>
        <end position="265"/>
    </location>
</feature>
<feature type="binding site" evidence="1">
    <location>
        <position position="82"/>
    </location>
    <ligand>
        <name>a carbohydrate</name>
        <dbReference type="ChEBI" id="CHEBI:16646"/>
    </ligand>
</feature>
<feature type="binding site" evidence="1">
    <location>
        <position position="104"/>
    </location>
    <ligand>
        <name>a carbohydrate</name>
        <dbReference type="ChEBI" id="CHEBI:16646"/>
    </ligand>
</feature>
<feature type="binding site" evidence="1">
    <location>
        <position position="131"/>
    </location>
    <ligand>
        <name>a carbohydrate</name>
        <dbReference type="ChEBI" id="CHEBI:16646"/>
    </ligand>
</feature>
<feature type="binding site" evidence="1">
    <location>
        <position position="132"/>
    </location>
    <ligand>
        <name>a carbohydrate</name>
        <dbReference type="ChEBI" id="CHEBI:16646"/>
    </ligand>
</feature>
<feature type="binding site" evidence="1">
    <location>
        <position position="201"/>
    </location>
    <ligand>
        <name>a carbohydrate</name>
        <dbReference type="ChEBI" id="CHEBI:16646"/>
    </ligand>
</feature>
<feature type="glycosylation site" description="N-linked (GlcNAc...) asparagine" evidence="2">
    <location>
        <position position="268"/>
    </location>
</feature>
<feature type="turn" evidence="8">
    <location>
        <begin position="267"/>
        <end position="271"/>
    </location>
</feature>
<feature type="helix" evidence="8">
    <location>
        <begin position="272"/>
        <end position="285"/>
    </location>
</feature>
<feature type="turn" evidence="8">
    <location>
        <begin position="286"/>
        <end position="289"/>
    </location>
</feature>
<accession>Q14165</accession>